<protein>
    <recommendedName>
        <fullName evidence="1">Chaperonin GroEL</fullName>
        <ecNumber evidence="1">5.6.1.7</ecNumber>
    </recommendedName>
    <alternativeName>
        <fullName evidence="1">60 kDa chaperonin</fullName>
    </alternativeName>
    <alternativeName>
        <fullName evidence="1">Chaperonin-60</fullName>
        <shortName evidence="1">Cpn60</shortName>
    </alternativeName>
</protein>
<proteinExistence type="inferred from homology"/>
<dbReference type="EC" id="5.6.1.7" evidence="1"/>
<dbReference type="EMBL" id="CP000416">
    <property type="protein sequence ID" value="ABJ63763.1"/>
    <property type="molecule type" value="Genomic_DNA"/>
</dbReference>
<dbReference type="RefSeq" id="WP_011667388.1">
    <property type="nucleotide sequence ID" value="NC_008497.1"/>
</dbReference>
<dbReference type="SMR" id="Q03SQ9"/>
<dbReference type="STRING" id="387344.LVIS_0618"/>
<dbReference type="GeneID" id="56992436"/>
<dbReference type="KEGG" id="lbr:LVIS_0618"/>
<dbReference type="eggNOG" id="COG0459">
    <property type="taxonomic scope" value="Bacteria"/>
</dbReference>
<dbReference type="HOGENOM" id="CLU_016503_3_0_9"/>
<dbReference type="Proteomes" id="UP000001652">
    <property type="component" value="Chromosome"/>
</dbReference>
<dbReference type="GO" id="GO:0005737">
    <property type="term" value="C:cytoplasm"/>
    <property type="evidence" value="ECO:0007669"/>
    <property type="project" value="UniProtKB-SubCell"/>
</dbReference>
<dbReference type="GO" id="GO:0005524">
    <property type="term" value="F:ATP binding"/>
    <property type="evidence" value="ECO:0007669"/>
    <property type="project" value="UniProtKB-UniRule"/>
</dbReference>
<dbReference type="GO" id="GO:0140662">
    <property type="term" value="F:ATP-dependent protein folding chaperone"/>
    <property type="evidence" value="ECO:0007669"/>
    <property type="project" value="InterPro"/>
</dbReference>
<dbReference type="GO" id="GO:0016853">
    <property type="term" value="F:isomerase activity"/>
    <property type="evidence" value="ECO:0007669"/>
    <property type="project" value="UniProtKB-KW"/>
</dbReference>
<dbReference type="GO" id="GO:0051082">
    <property type="term" value="F:unfolded protein binding"/>
    <property type="evidence" value="ECO:0007669"/>
    <property type="project" value="UniProtKB-UniRule"/>
</dbReference>
<dbReference type="GO" id="GO:0042026">
    <property type="term" value="P:protein refolding"/>
    <property type="evidence" value="ECO:0007669"/>
    <property type="project" value="UniProtKB-UniRule"/>
</dbReference>
<dbReference type="CDD" id="cd03344">
    <property type="entry name" value="GroEL"/>
    <property type="match status" value="1"/>
</dbReference>
<dbReference type="FunFam" id="3.50.7.10:FF:000001">
    <property type="entry name" value="60 kDa chaperonin"/>
    <property type="match status" value="1"/>
</dbReference>
<dbReference type="Gene3D" id="3.50.7.10">
    <property type="entry name" value="GroEL"/>
    <property type="match status" value="1"/>
</dbReference>
<dbReference type="Gene3D" id="1.10.560.10">
    <property type="entry name" value="GroEL-like equatorial domain"/>
    <property type="match status" value="1"/>
</dbReference>
<dbReference type="Gene3D" id="3.30.260.10">
    <property type="entry name" value="TCP-1-like chaperonin intermediate domain"/>
    <property type="match status" value="1"/>
</dbReference>
<dbReference type="HAMAP" id="MF_00600">
    <property type="entry name" value="CH60"/>
    <property type="match status" value="1"/>
</dbReference>
<dbReference type="InterPro" id="IPR018370">
    <property type="entry name" value="Chaperonin_Cpn60_CS"/>
</dbReference>
<dbReference type="InterPro" id="IPR001844">
    <property type="entry name" value="Cpn60/GroEL"/>
</dbReference>
<dbReference type="InterPro" id="IPR002423">
    <property type="entry name" value="Cpn60/GroEL/TCP-1"/>
</dbReference>
<dbReference type="InterPro" id="IPR027409">
    <property type="entry name" value="GroEL-like_apical_dom_sf"/>
</dbReference>
<dbReference type="InterPro" id="IPR027413">
    <property type="entry name" value="GROEL-like_equatorial_sf"/>
</dbReference>
<dbReference type="InterPro" id="IPR027410">
    <property type="entry name" value="TCP-1-like_intermed_sf"/>
</dbReference>
<dbReference type="NCBIfam" id="TIGR02348">
    <property type="entry name" value="GroEL"/>
    <property type="match status" value="1"/>
</dbReference>
<dbReference type="NCBIfam" id="NF000592">
    <property type="entry name" value="PRK00013.1"/>
    <property type="match status" value="1"/>
</dbReference>
<dbReference type="NCBIfam" id="NF009487">
    <property type="entry name" value="PRK12849.1"/>
    <property type="match status" value="1"/>
</dbReference>
<dbReference type="NCBIfam" id="NF009488">
    <property type="entry name" value="PRK12850.1"/>
    <property type="match status" value="1"/>
</dbReference>
<dbReference type="NCBIfam" id="NF009489">
    <property type="entry name" value="PRK12851.1"/>
    <property type="match status" value="1"/>
</dbReference>
<dbReference type="PANTHER" id="PTHR45633">
    <property type="entry name" value="60 KDA HEAT SHOCK PROTEIN, MITOCHONDRIAL"/>
    <property type="match status" value="1"/>
</dbReference>
<dbReference type="Pfam" id="PF00118">
    <property type="entry name" value="Cpn60_TCP1"/>
    <property type="match status" value="1"/>
</dbReference>
<dbReference type="PRINTS" id="PR00298">
    <property type="entry name" value="CHAPERONIN60"/>
</dbReference>
<dbReference type="SUPFAM" id="SSF52029">
    <property type="entry name" value="GroEL apical domain-like"/>
    <property type="match status" value="1"/>
</dbReference>
<dbReference type="SUPFAM" id="SSF48592">
    <property type="entry name" value="GroEL equatorial domain-like"/>
    <property type="match status" value="2"/>
</dbReference>
<dbReference type="PROSITE" id="PS00296">
    <property type="entry name" value="CHAPERONINS_CPN60"/>
    <property type="match status" value="1"/>
</dbReference>
<sequence>MAKELKFSEDARSKMLAGVDKLANTVKTTLGPKGRNVVLEQSYGNPTITNDGVTIAKAIELEDHFENMGAKLVSEVASKTNDIAGDGTTTATVLTQAIVNEGMKNVTAGANPVGIRRGIEKATGAAVDALHKMSHDVKTKDDIAQIASISSASKETGKLIADAMEKVGNDGVITIEESRGVDTSLDVVEGMQFDRGYMSQYMVTDNDKMEANLDNPYILITDKKIANIQDILPLLQSVVEQSRSLLIIADDITGEALPTLVLNKMRGTFNVVAVKAPGFGDRRKAQLQDIAVLTGGTVITDDLGLNLKDTTIDQLGQAQKVNVTKDDTTVVEGAGSKDQIAARVAEIKGQIEDTTSDFDRDKLKERLAKLSGGVAVVRVGAATETELKERKYRIEDALNATRAAVEEGFVAGGGTALINVIGDVAKLEAEGDEKTGINIVLRALEEPVRQIAQNAGVEGSVVVEHLKGEKPGVGYNAADNKYEDMVAAGITDPTKVTRSALQNAASVSALLLTTEAVVAEKPEDNPAPAAPAANPGMGGMM</sequence>
<feature type="chain" id="PRO_1000025797" description="Chaperonin GroEL">
    <location>
        <begin position="1"/>
        <end position="541"/>
    </location>
</feature>
<feature type="region of interest" description="Disordered" evidence="2">
    <location>
        <begin position="521"/>
        <end position="541"/>
    </location>
</feature>
<feature type="compositionally biased region" description="Low complexity" evidence="2">
    <location>
        <begin position="526"/>
        <end position="535"/>
    </location>
</feature>
<feature type="binding site" evidence="1">
    <location>
        <begin position="29"/>
        <end position="32"/>
    </location>
    <ligand>
        <name>ATP</name>
        <dbReference type="ChEBI" id="CHEBI:30616"/>
    </ligand>
</feature>
<feature type="binding site" evidence="1">
    <location>
        <begin position="86"/>
        <end position="90"/>
    </location>
    <ligand>
        <name>ATP</name>
        <dbReference type="ChEBI" id="CHEBI:30616"/>
    </ligand>
</feature>
<feature type="binding site" evidence="1">
    <location>
        <position position="413"/>
    </location>
    <ligand>
        <name>ATP</name>
        <dbReference type="ChEBI" id="CHEBI:30616"/>
    </ligand>
</feature>
<feature type="binding site" evidence="1">
    <location>
        <begin position="476"/>
        <end position="478"/>
    </location>
    <ligand>
        <name>ATP</name>
        <dbReference type="ChEBI" id="CHEBI:30616"/>
    </ligand>
</feature>
<feature type="binding site" evidence="1">
    <location>
        <position position="492"/>
    </location>
    <ligand>
        <name>ATP</name>
        <dbReference type="ChEBI" id="CHEBI:30616"/>
    </ligand>
</feature>
<reference key="1">
    <citation type="journal article" date="2006" name="Proc. Natl. Acad. Sci. U.S.A.">
        <title>Comparative genomics of the lactic acid bacteria.</title>
        <authorList>
            <person name="Makarova K.S."/>
            <person name="Slesarev A."/>
            <person name="Wolf Y.I."/>
            <person name="Sorokin A."/>
            <person name="Mirkin B."/>
            <person name="Koonin E.V."/>
            <person name="Pavlov A."/>
            <person name="Pavlova N."/>
            <person name="Karamychev V."/>
            <person name="Polouchine N."/>
            <person name="Shakhova V."/>
            <person name="Grigoriev I."/>
            <person name="Lou Y."/>
            <person name="Rohksar D."/>
            <person name="Lucas S."/>
            <person name="Huang K."/>
            <person name="Goodstein D.M."/>
            <person name="Hawkins T."/>
            <person name="Plengvidhya V."/>
            <person name="Welker D."/>
            <person name="Hughes J."/>
            <person name="Goh Y."/>
            <person name="Benson A."/>
            <person name="Baldwin K."/>
            <person name="Lee J.-H."/>
            <person name="Diaz-Muniz I."/>
            <person name="Dosti B."/>
            <person name="Smeianov V."/>
            <person name="Wechter W."/>
            <person name="Barabote R."/>
            <person name="Lorca G."/>
            <person name="Altermann E."/>
            <person name="Barrangou R."/>
            <person name="Ganesan B."/>
            <person name="Xie Y."/>
            <person name="Rawsthorne H."/>
            <person name="Tamir D."/>
            <person name="Parker C."/>
            <person name="Breidt F."/>
            <person name="Broadbent J.R."/>
            <person name="Hutkins R."/>
            <person name="O'Sullivan D."/>
            <person name="Steele J."/>
            <person name="Unlu G."/>
            <person name="Saier M.H. Jr."/>
            <person name="Klaenhammer T."/>
            <person name="Richardson P."/>
            <person name="Kozyavkin S."/>
            <person name="Weimer B.C."/>
            <person name="Mills D.A."/>
        </authorList>
    </citation>
    <scope>NUCLEOTIDE SEQUENCE [LARGE SCALE GENOMIC DNA]</scope>
    <source>
        <strain>ATCC 367 / BCRC 12310 / CIP 105137 / JCM 1170 / LMG 11437 / NCIMB 947 / NCTC 947</strain>
    </source>
</reference>
<gene>
    <name evidence="1" type="primary">groEL</name>
    <name evidence="1" type="synonym">groL</name>
    <name type="ordered locus">LVIS_0618</name>
</gene>
<comment type="function">
    <text evidence="1">Together with its co-chaperonin GroES, plays an essential role in assisting protein folding. The GroEL-GroES system forms a nano-cage that allows encapsulation of the non-native substrate proteins and provides a physical environment optimized to promote and accelerate protein folding.</text>
</comment>
<comment type="catalytic activity">
    <reaction evidence="1">
        <text>ATP + H2O + a folded polypeptide = ADP + phosphate + an unfolded polypeptide.</text>
        <dbReference type="EC" id="5.6.1.7"/>
    </reaction>
</comment>
<comment type="subunit">
    <text evidence="1">Forms a cylinder of 14 subunits composed of two heptameric rings stacked back-to-back. Interacts with the co-chaperonin GroES.</text>
</comment>
<comment type="subcellular location">
    <subcellularLocation>
        <location evidence="1">Cytoplasm</location>
    </subcellularLocation>
</comment>
<comment type="similarity">
    <text evidence="1">Belongs to the chaperonin (HSP60) family.</text>
</comment>
<organism>
    <name type="scientific">Levilactobacillus brevis (strain ATCC 367 / BCRC 12310 / CIP 105137 / JCM 1170 / LMG 11437 / NCIMB 947 / NCTC 947)</name>
    <name type="common">Lactobacillus brevis</name>
    <dbReference type="NCBI Taxonomy" id="387344"/>
    <lineage>
        <taxon>Bacteria</taxon>
        <taxon>Bacillati</taxon>
        <taxon>Bacillota</taxon>
        <taxon>Bacilli</taxon>
        <taxon>Lactobacillales</taxon>
        <taxon>Lactobacillaceae</taxon>
        <taxon>Levilactobacillus</taxon>
    </lineage>
</organism>
<accession>Q03SQ9</accession>
<name>CH60_LEVBA</name>
<keyword id="KW-0067">ATP-binding</keyword>
<keyword id="KW-0143">Chaperone</keyword>
<keyword id="KW-0963">Cytoplasm</keyword>
<keyword id="KW-0413">Isomerase</keyword>
<keyword id="KW-0547">Nucleotide-binding</keyword>
<keyword id="KW-1185">Reference proteome</keyword>
<evidence type="ECO:0000255" key="1">
    <source>
        <dbReference type="HAMAP-Rule" id="MF_00600"/>
    </source>
</evidence>
<evidence type="ECO:0000256" key="2">
    <source>
        <dbReference type="SAM" id="MobiDB-lite"/>
    </source>
</evidence>